<evidence type="ECO:0000255" key="1">
    <source>
        <dbReference type="HAMAP-Rule" id="MF_01343"/>
    </source>
</evidence>
<evidence type="ECO:0000305" key="2"/>
<gene>
    <name evidence="1" type="primary">rpsO</name>
    <name type="ordered locus">ERGA_CDS_03560</name>
</gene>
<proteinExistence type="inferred from homology"/>
<protein>
    <recommendedName>
        <fullName evidence="1">Small ribosomal subunit protein uS15</fullName>
    </recommendedName>
    <alternativeName>
        <fullName evidence="2">30S ribosomal protein S15</fullName>
    </alternativeName>
</protein>
<reference key="1">
    <citation type="journal article" date="2006" name="J. Bacteriol.">
        <title>Comparative genomic analysis of three strains of Ehrlichia ruminantium reveals an active process of genome size plasticity.</title>
        <authorList>
            <person name="Frutos R."/>
            <person name="Viari A."/>
            <person name="Ferraz C."/>
            <person name="Morgat A."/>
            <person name="Eychenie S."/>
            <person name="Kandassamy Y."/>
            <person name="Chantal I."/>
            <person name="Bensaid A."/>
            <person name="Coissac E."/>
            <person name="Vachiery N."/>
            <person name="Demaille J."/>
            <person name="Martinez D."/>
        </authorList>
    </citation>
    <scope>NUCLEOTIDE SEQUENCE [LARGE SCALE GENOMIC DNA]</scope>
    <source>
        <strain>Gardel</strain>
    </source>
</reference>
<organism>
    <name type="scientific">Ehrlichia ruminantium (strain Gardel)</name>
    <dbReference type="NCBI Taxonomy" id="302409"/>
    <lineage>
        <taxon>Bacteria</taxon>
        <taxon>Pseudomonadati</taxon>
        <taxon>Pseudomonadota</taxon>
        <taxon>Alphaproteobacteria</taxon>
        <taxon>Rickettsiales</taxon>
        <taxon>Anaplasmataceae</taxon>
        <taxon>Ehrlichia</taxon>
    </lineage>
</organism>
<accession>Q5FHK6</accession>
<comment type="function">
    <text evidence="1">One of the primary rRNA binding proteins, it binds directly to 16S rRNA where it helps nucleate assembly of the platform of the 30S subunit by binding and bridging several RNA helices of the 16S rRNA.</text>
</comment>
<comment type="function">
    <text evidence="1">Forms an intersubunit bridge (bridge B4) with the 23S rRNA of the 50S subunit in the ribosome.</text>
</comment>
<comment type="subunit">
    <text evidence="1">Part of the 30S ribosomal subunit. Forms a bridge to the 50S subunit in the 70S ribosome, contacting the 23S rRNA.</text>
</comment>
<comment type="similarity">
    <text evidence="1">Belongs to the universal ribosomal protein uS15 family.</text>
</comment>
<dbReference type="EMBL" id="CR925677">
    <property type="protein sequence ID" value="CAI27808.1"/>
    <property type="molecule type" value="Genomic_DNA"/>
</dbReference>
<dbReference type="RefSeq" id="WP_011155034.1">
    <property type="nucleotide sequence ID" value="NC_006831.1"/>
</dbReference>
<dbReference type="SMR" id="Q5FHK6"/>
<dbReference type="GeneID" id="33057977"/>
<dbReference type="KEGG" id="erg:ERGA_CDS_03560"/>
<dbReference type="HOGENOM" id="CLU_148518_0_0_5"/>
<dbReference type="OrthoDB" id="9799262at2"/>
<dbReference type="Proteomes" id="UP000000533">
    <property type="component" value="Chromosome"/>
</dbReference>
<dbReference type="GO" id="GO:0022627">
    <property type="term" value="C:cytosolic small ribosomal subunit"/>
    <property type="evidence" value="ECO:0007669"/>
    <property type="project" value="TreeGrafter"/>
</dbReference>
<dbReference type="GO" id="GO:0019843">
    <property type="term" value="F:rRNA binding"/>
    <property type="evidence" value="ECO:0007669"/>
    <property type="project" value="UniProtKB-UniRule"/>
</dbReference>
<dbReference type="GO" id="GO:0003735">
    <property type="term" value="F:structural constituent of ribosome"/>
    <property type="evidence" value="ECO:0007669"/>
    <property type="project" value="InterPro"/>
</dbReference>
<dbReference type="GO" id="GO:0006412">
    <property type="term" value="P:translation"/>
    <property type="evidence" value="ECO:0007669"/>
    <property type="project" value="UniProtKB-UniRule"/>
</dbReference>
<dbReference type="CDD" id="cd00353">
    <property type="entry name" value="Ribosomal_S15p_S13e"/>
    <property type="match status" value="1"/>
</dbReference>
<dbReference type="FunFam" id="1.10.287.10:FF:000002">
    <property type="entry name" value="30S ribosomal protein S15"/>
    <property type="match status" value="1"/>
</dbReference>
<dbReference type="Gene3D" id="1.10.287.10">
    <property type="entry name" value="S15/NS1, RNA-binding"/>
    <property type="match status" value="1"/>
</dbReference>
<dbReference type="HAMAP" id="MF_01343_B">
    <property type="entry name" value="Ribosomal_uS15_B"/>
    <property type="match status" value="1"/>
</dbReference>
<dbReference type="InterPro" id="IPR000589">
    <property type="entry name" value="Ribosomal_uS15"/>
</dbReference>
<dbReference type="InterPro" id="IPR005290">
    <property type="entry name" value="Ribosomal_uS15_bac-type"/>
</dbReference>
<dbReference type="InterPro" id="IPR009068">
    <property type="entry name" value="uS15_NS1_RNA-bd_sf"/>
</dbReference>
<dbReference type="NCBIfam" id="TIGR00952">
    <property type="entry name" value="S15_bact"/>
    <property type="match status" value="1"/>
</dbReference>
<dbReference type="PANTHER" id="PTHR23321">
    <property type="entry name" value="RIBOSOMAL PROTEIN S15, BACTERIAL AND ORGANELLAR"/>
    <property type="match status" value="1"/>
</dbReference>
<dbReference type="PANTHER" id="PTHR23321:SF26">
    <property type="entry name" value="SMALL RIBOSOMAL SUBUNIT PROTEIN US15M"/>
    <property type="match status" value="1"/>
</dbReference>
<dbReference type="Pfam" id="PF00312">
    <property type="entry name" value="Ribosomal_S15"/>
    <property type="match status" value="1"/>
</dbReference>
<dbReference type="SMART" id="SM01387">
    <property type="entry name" value="Ribosomal_S15"/>
    <property type="match status" value="1"/>
</dbReference>
<dbReference type="SUPFAM" id="SSF47060">
    <property type="entry name" value="S15/NS1 RNA-binding domain"/>
    <property type="match status" value="1"/>
</dbReference>
<keyword id="KW-0687">Ribonucleoprotein</keyword>
<keyword id="KW-0689">Ribosomal protein</keyword>
<keyword id="KW-0694">RNA-binding</keyword>
<keyword id="KW-0699">rRNA-binding</keyword>
<sequence>MSVTPERKSELISEYCLKKGDTGSSFVQCAILSERIRNLTEHLKIHKKDFHCRRGLMVLVCRRRNELQYIRRKYGNDRYLALVKQLGIRDVFH</sequence>
<feature type="chain" id="PRO_0000115433" description="Small ribosomal subunit protein uS15">
    <location>
        <begin position="1"/>
        <end position="93"/>
    </location>
</feature>
<name>RS15_EHRRG</name>